<proteinExistence type="inferred from homology"/>
<gene>
    <name evidence="1" type="primary">murI</name>
    <name type="ordered locus">NGR_c16410</name>
</gene>
<feature type="chain" id="PRO_1000125616" description="Glutamate racemase">
    <location>
        <begin position="1"/>
        <end position="267"/>
    </location>
</feature>
<feature type="active site" description="Proton donor/acceptor" evidence="1">
    <location>
        <position position="77"/>
    </location>
</feature>
<feature type="active site" description="Proton donor/acceptor" evidence="1">
    <location>
        <position position="192"/>
    </location>
</feature>
<feature type="binding site" evidence="1">
    <location>
        <begin position="13"/>
        <end position="14"/>
    </location>
    <ligand>
        <name>substrate</name>
    </ligand>
</feature>
<feature type="binding site" evidence="1">
    <location>
        <begin position="45"/>
        <end position="46"/>
    </location>
    <ligand>
        <name>substrate</name>
    </ligand>
</feature>
<feature type="binding site" evidence="1">
    <location>
        <begin position="78"/>
        <end position="79"/>
    </location>
    <ligand>
        <name>substrate</name>
    </ligand>
</feature>
<feature type="binding site" evidence="1">
    <location>
        <begin position="193"/>
        <end position="194"/>
    </location>
    <ligand>
        <name>substrate</name>
    </ligand>
</feature>
<accession>C3MD87</accession>
<organism>
    <name type="scientific">Sinorhizobium fredii (strain NBRC 101917 / NGR234)</name>
    <dbReference type="NCBI Taxonomy" id="394"/>
    <lineage>
        <taxon>Bacteria</taxon>
        <taxon>Pseudomonadati</taxon>
        <taxon>Pseudomonadota</taxon>
        <taxon>Alphaproteobacteria</taxon>
        <taxon>Hyphomicrobiales</taxon>
        <taxon>Rhizobiaceae</taxon>
        <taxon>Sinorhizobium/Ensifer group</taxon>
        <taxon>Sinorhizobium</taxon>
    </lineage>
</organism>
<evidence type="ECO:0000255" key="1">
    <source>
        <dbReference type="HAMAP-Rule" id="MF_00258"/>
    </source>
</evidence>
<protein>
    <recommendedName>
        <fullName evidence="1">Glutamate racemase</fullName>
        <ecNumber evidence="1">5.1.1.3</ecNumber>
    </recommendedName>
</protein>
<dbReference type="EC" id="5.1.1.3" evidence="1"/>
<dbReference type="EMBL" id="CP001389">
    <property type="protein sequence ID" value="ACP25406.1"/>
    <property type="molecule type" value="Genomic_DNA"/>
</dbReference>
<dbReference type="RefSeq" id="WP_012708175.1">
    <property type="nucleotide sequence ID" value="NC_012587.1"/>
</dbReference>
<dbReference type="RefSeq" id="YP_002826159.1">
    <property type="nucleotide sequence ID" value="NC_012587.1"/>
</dbReference>
<dbReference type="SMR" id="C3MD87"/>
<dbReference type="STRING" id="394.NGR_c16410"/>
<dbReference type="KEGG" id="rhi:NGR_c16410"/>
<dbReference type="PATRIC" id="fig|394.7.peg.4457"/>
<dbReference type="eggNOG" id="COG0796">
    <property type="taxonomic scope" value="Bacteria"/>
</dbReference>
<dbReference type="HOGENOM" id="CLU_052344_2_0_5"/>
<dbReference type="OrthoDB" id="9801055at2"/>
<dbReference type="UniPathway" id="UPA00219"/>
<dbReference type="Proteomes" id="UP000001054">
    <property type="component" value="Chromosome"/>
</dbReference>
<dbReference type="GO" id="GO:0008881">
    <property type="term" value="F:glutamate racemase activity"/>
    <property type="evidence" value="ECO:0007669"/>
    <property type="project" value="UniProtKB-UniRule"/>
</dbReference>
<dbReference type="GO" id="GO:0071555">
    <property type="term" value="P:cell wall organization"/>
    <property type="evidence" value="ECO:0007669"/>
    <property type="project" value="UniProtKB-KW"/>
</dbReference>
<dbReference type="GO" id="GO:0009252">
    <property type="term" value="P:peptidoglycan biosynthetic process"/>
    <property type="evidence" value="ECO:0007669"/>
    <property type="project" value="UniProtKB-UniRule"/>
</dbReference>
<dbReference type="GO" id="GO:0008360">
    <property type="term" value="P:regulation of cell shape"/>
    <property type="evidence" value="ECO:0007669"/>
    <property type="project" value="UniProtKB-KW"/>
</dbReference>
<dbReference type="Gene3D" id="3.40.50.1860">
    <property type="match status" value="2"/>
</dbReference>
<dbReference type="HAMAP" id="MF_00258">
    <property type="entry name" value="Glu_racemase"/>
    <property type="match status" value="1"/>
</dbReference>
<dbReference type="InterPro" id="IPR015942">
    <property type="entry name" value="Asp/Glu/hydantoin_racemase"/>
</dbReference>
<dbReference type="InterPro" id="IPR001920">
    <property type="entry name" value="Asp/Glu_race"/>
</dbReference>
<dbReference type="InterPro" id="IPR033134">
    <property type="entry name" value="Asp/Glu_racemase_AS_2"/>
</dbReference>
<dbReference type="InterPro" id="IPR004391">
    <property type="entry name" value="Glu_race"/>
</dbReference>
<dbReference type="NCBIfam" id="TIGR00067">
    <property type="entry name" value="glut_race"/>
    <property type="match status" value="1"/>
</dbReference>
<dbReference type="PANTHER" id="PTHR21198">
    <property type="entry name" value="GLUTAMATE RACEMASE"/>
    <property type="match status" value="1"/>
</dbReference>
<dbReference type="PANTHER" id="PTHR21198:SF2">
    <property type="entry name" value="GLUTAMATE RACEMASE"/>
    <property type="match status" value="1"/>
</dbReference>
<dbReference type="Pfam" id="PF01177">
    <property type="entry name" value="Asp_Glu_race"/>
    <property type="match status" value="1"/>
</dbReference>
<dbReference type="SUPFAM" id="SSF53681">
    <property type="entry name" value="Aspartate/glutamate racemase"/>
    <property type="match status" value="2"/>
</dbReference>
<dbReference type="PROSITE" id="PS00924">
    <property type="entry name" value="ASP_GLU_RACEMASE_2"/>
    <property type="match status" value="1"/>
</dbReference>
<sequence length="267" mass="29440">MTTTDLKPILVFDSGIGGLTVLREARVLMPERHFIYVADDAGFPYGGWEEGALKERVIALFGDLLREHDPEICIIACNTAFTLVGADLRAAYPQMTFVGTVPAIKPAAERTRSGLVSVLATPGTVKRAYTRDLIQSFASQCHVRLVGSENLARMAEAYIRGEKLEDEIVLAEIAPCFVEMDGRKTDIVVLACTHYPFMENVFRRLAPWPVDWLDPAEAIARRARSLVPLPNGFEPLNGEDPAIFTSGKPDFATRRLMQGFGLTVRSA</sequence>
<name>MURI_SINFN</name>
<keyword id="KW-0133">Cell shape</keyword>
<keyword id="KW-0961">Cell wall biogenesis/degradation</keyword>
<keyword id="KW-0413">Isomerase</keyword>
<keyword id="KW-0573">Peptidoglycan synthesis</keyword>
<keyword id="KW-1185">Reference proteome</keyword>
<reference key="1">
    <citation type="journal article" date="2009" name="Appl. Environ. Microbiol.">
        <title>Rhizobium sp. strain NGR234 possesses a remarkable number of secretion systems.</title>
        <authorList>
            <person name="Schmeisser C."/>
            <person name="Liesegang H."/>
            <person name="Krysciak D."/>
            <person name="Bakkou N."/>
            <person name="Le Quere A."/>
            <person name="Wollherr A."/>
            <person name="Heinemeyer I."/>
            <person name="Morgenstern B."/>
            <person name="Pommerening-Roeser A."/>
            <person name="Flores M."/>
            <person name="Palacios R."/>
            <person name="Brenner S."/>
            <person name="Gottschalk G."/>
            <person name="Schmitz R.A."/>
            <person name="Broughton W.J."/>
            <person name="Perret X."/>
            <person name="Strittmatter A.W."/>
            <person name="Streit W.R."/>
        </authorList>
    </citation>
    <scope>NUCLEOTIDE SEQUENCE [LARGE SCALE GENOMIC DNA]</scope>
    <source>
        <strain>NBRC 101917 / NGR234</strain>
    </source>
</reference>
<comment type="function">
    <text evidence="1">Provides the (R)-glutamate required for cell wall biosynthesis.</text>
</comment>
<comment type="catalytic activity">
    <reaction evidence="1">
        <text>L-glutamate = D-glutamate</text>
        <dbReference type="Rhea" id="RHEA:12813"/>
        <dbReference type="ChEBI" id="CHEBI:29985"/>
        <dbReference type="ChEBI" id="CHEBI:29986"/>
        <dbReference type="EC" id="5.1.1.3"/>
    </reaction>
</comment>
<comment type="pathway">
    <text evidence="1">Cell wall biogenesis; peptidoglycan biosynthesis.</text>
</comment>
<comment type="similarity">
    <text evidence="1">Belongs to the aspartate/glutamate racemases family.</text>
</comment>